<protein>
    <recommendedName>
        <fullName>Tolloid-like protein 1</fullName>
        <ecNumber>3.4.24.-</ecNumber>
    </recommendedName>
    <alternativeName>
        <fullName>Metalloprotease xolloid-like</fullName>
    </alternativeName>
    <alternativeName>
        <fullName>Xenopus tolloid-like protein 1</fullName>
    </alternativeName>
    <alternativeName>
        <fullName>Xlr</fullName>
    </alternativeName>
</protein>
<accession>Q8JI28</accession>
<gene>
    <name type="primary">tll1</name>
    <name type="synonym">xlr</name>
</gene>
<comment type="function">
    <text evidence="7">Protease which processes procollagen C-propeptides, such as chordin. Required for the embryonic development. Predominant protease, which in the development, influences dorsal-ventral patterning and skeletogenesis.</text>
</comment>
<comment type="cofactor">
    <cofactor evidence="5">
        <name>Zn(2+)</name>
        <dbReference type="ChEBI" id="CHEBI:29105"/>
    </cofactor>
    <text evidence="5">Binds 1 zinc ion per subunit.</text>
</comment>
<comment type="interaction">
    <interactant intactId="EBI-1997794">
        <id>Q8JI28</id>
    </interactant>
    <interactant intactId="EBI-1997746">
        <id>Q91713</id>
        <label>chrd</label>
    </interactant>
    <organismsDiffer>false</organismsDiffer>
    <experiments>2</experiments>
</comment>
<comment type="subcellular location">
    <subcellularLocation>
        <location evidence="1">Secreted</location>
    </subcellularLocation>
</comment>
<comment type="developmental stage">
    <text evidence="7">Expressed in the marginal zone of mid-gastrulae, and in ventral and lateral sectors. At neurula stages, strongly expressed around the blastopore and in the pharyngeal endoderm, and more weakly expressed throughout the ventral half of the embryo. Transcripts are detected in the nervous system, particularly the hindbrain and spinal cord, and tailbud of tailbud stage embryos, with weaker expression in the anterior nervous system, otic vesicle, heart, and pronephric duct. Transcription is increased by BMP4 and decreased by Noggin and tBR, indicating that it is regulated by BMP signaling.</text>
</comment>
<proteinExistence type="evidence at protein level"/>
<feature type="signal peptide" evidence="2">
    <location>
        <begin position="1"/>
        <end position="25"/>
    </location>
</feature>
<feature type="propeptide" id="PRO_0000046029" evidence="1">
    <location>
        <begin position="26"/>
        <end position="142"/>
    </location>
</feature>
<feature type="chain" id="PRO_0000046030" description="Tolloid-like protein 1">
    <location>
        <begin position="143"/>
        <end position="1007"/>
    </location>
</feature>
<feature type="domain" description="Peptidase M12A" evidence="5">
    <location>
        <begin position="143"/>
        <end position="342"/>
    </location>
</feature>
<feature type="domain" description="CUB 1" evidence="3">
    <location>
        <begin position="344"/>
        <end position="456"/>
    </location>
</feature>
<feature type="domain" description="CUB 2" evidence="3">
    <location>
        <begin position="457"/>
        <end position="569"/>
    </location>
</feature>
<feature type="domain" description="EGF-like 1; calcium-binding" evidence="4">
    <location>
        <begin position="569"/>
        <end position="610"/>
    </location>
</feature>
<feature type="domain" description="CUB 3" evidence="3">
    <location>
        <begin position="613"/>
        <end position="725"/>
    </location>
</feature>
<feature type="domain" description="EGF-like 2; calcium-binding" evidence="4">
    <location>
        <begin position="725"/>
        <end position="765"/>
    </location>
</feature>
<feature type="domain" description="CUB 4" evidence="3">
    <location>
        <begin position="769"/>
        <end position="881"/>
    </location>
</feature>
<feature type="domain" description="CUB 5" evidence="3">
    <location>
        <begin position="882"/>
        <end position="998"/>
    </location>
</feature>
<feature type="region of interest" description="Disordered" evidence="6">
    <location>
        <begin position="115"/>
        <end position="139"/>
    </location>
</feature>
<feature type="compositionally biased region" description="Polar residues" evidence="6">
    <location>
        <begin position="116"/>
        <end position="133"/>
    </location>
</feature>
<feature type="active site" evidence="5">
    <location>
        <position position="236"/>
    </location>
</feature>
<feature type="binding site" evidence="5">
    <location>
        <position position="235"/>
    </location>
    <ligand>
        <name>Zn(2+)</name>
        <dbReference type="ChEBI" id="CHEBI:29105"/>
        <note>catalytic</note>
    </ligand>
</feature>
<feature type="binding site" evidence="5">
    <location>
        <position position="239"/>
    </location>
    <ligand>
        <name>Zn(2+)</name>
        <dbReference type="ChEBI" id="CHEBI:29105"/>
        <note>catalytic</note>
    </ligand>
</feature>
<feature type="binding site" evidence="5">
    <location>
        <position position="245"/>
    </location>
    <ligand>
        <name>Zn(2+)</name>
        <dbReference type="ChEBI" id="CHEBI:29105"/>
        <note>catalytic</note>
    </ligand>
</feature>
<feature type="glycosylation site" description="N-linked (GlcNAc...) asparagine" evidence="2">
    <location>
        <position position="164"/>
    </location>
</feature>
<feature type="glycosylation site" description="N-linked (GlcNAc...) asparagine" evidence="2">
    <location>
        <position position="354"/>
    </location>
</feature>
<feature type="glycosylation site" description="N-linked (GlcNAc...) asparagine" evidence="2">
    <location>
        <position position="385"/>
    </location>
</feature>
<feature type="glycosylation site" description="N-linked (GlcNAc...) asparagine" evidence="2">
    <location>
        <position position="621"/>
    </location>
</feature>
<feature type="disulfide bond" evidence="5">
    <location>
        <begin position="185"/>
        <end position="341"/>
    </location>
</feature>
<feature type="disulfide bond" evidence="5">
    <location>
        <begin position="205"/>
        <end position="227"/>
    </location>
</feature>
<feature type="disulfide bond" evidence="5">
    <location>
        <begin position="207"/>
        <end position="208"/>
    </location>
</feature>
<feature type="disulfide bond" evidence="1">
    <location>
        <begin position="344"/>
        <end position="370"/>
    </location>
</feature>
<feature type="disulfide bond" evidence="1">
    <location>
        <begin position="397"/>
        <end position="419"/>
    </location>
</feature>
<feature type="disulfide bond" evidence="1">
    <location>
        <begin position="457"/>
        <end position="483"/>
    </location>
</feature>
<feature type="disulfide bond" evidence="1">
    <location>
        <begin position="510"/>
        <end position="532"/>
    </location>
</feature>
<feature type="disulfide bond" evidence="1">
    <location>
        <begin position="573"/>
        <end position="585"/>
    </location>
</feature>
<feature type="disulfide bond" evidence="1">
    <location>
        <begin position="581"/>
        <end position="594"/>
    </location>
</feature>
<feature type="disulfide bond" evidence="1">
    <location>
        <begin position="596"/>
        <end position="609"/>
    </location>
</feature>
<feature type="disulfide bond" evidence="1">
    <location>
        <begin position="613"/>
        <end position="639"/>
    </location>
</feature>
<feature type="disulfide bond" evidence="1">
    <location>
        <begin position="666"/>
        <end position="688"/>
    </location>
</feature>
<feature type="disulfide bond" evidence="1">
    <location>
        <begin position="729"/>
        <end position="740"/>
    </location>
</feature>
<feature type="disulfide bond" evidence="1">
    <location>
        <begin position="736"/>
        <end position="749"/>
    </location>
</feature>
<feature type="disulfide bond" evidence="1">
    <location>
        <begin position="751"/>
        <end position="764"/>
    </location>
</feature>
<feature type="disulfide bond" evidence="1">
    <location>
        <begin position="769"/>
        <end position="795"/>
    </location>
</feature>
<feature type="disulfide bond" evidence="1">
    <location>
        <begin position="822"/>
        <end position="844"/>
    </location>
</feature>
<feature type="disulfide bond" evidence="1">
    <location>
        <begin position="882"/>
        <end position="912"/>
    </location>
</feature>
<feature type="disulfide bond" evidence="1">
    <location>
        <begin position="939"/>
        <end position="961"/>
    </location>
</feature>
<sequence>MNMPSWLIFLLTGWTFCGNFFACGGLDYDYPNYENEEEKNEAIDYKDPCKAVVFWGDIALDEEDLKMFHIDRTIDLTQHSNEKLGHTTGGLEEHDLSKKRGALYQLIERIRRFGSGQENTTANSQKVDNNQSGKSKKIRIPRAATSRTERIWPGGVIPYVIGGNFTGSQRAMFKQAMRHWEKHTCVTFIERTDEESYIVFTYRPCGCCSYVGRRGNGPQAISIGKNCDKFGIVVHELGHVIGFWHEHTRPDRDDHVTIIRENIQPGQEYNFLKMEPGEVHSLGESYDFDSIMHYARNTFSRGMFLDTILPSRDENGLRPPIGQRTRLSKGDIAQARKLYRCPACGETLQESTGNFSSPGFPNGYPSYTHCIWRISVTPGEKIVLNFTTMDLYKSSLCWYDYIEVRDGYWKKSPLLGRFCGDKLPDVLTSTDSRMWIEFRSSSNWVGKGFAAVYEAICGGEIHKDAGQIQSPNYPDDYRPLKECVWKITVAENYNVGLTFQAFEIERHDNCAYDYLEVRDGSSENSPLIGHFCGYDKPEDIRSTSNTLWMKFVSDGTVNKAGFAANFLKEEDECARPDNGGCEQRCVNTLGSYKCSCDPGYELAPDKKSCEAACGGLLTKLNGTITTPAWPKEYPPNKNCVWQVVAPSQYRISMKFDYFELEGNEVCKYDYVEVRSGLSSDSKLHGKFCGTEVPEVITSQFNNMRIEFKSDNTVSKKGFRAHFFSDKDECSKDNGGCQHECINTIGSYVCQCRNGFVLHDNKHDCKEAECEHRIHSSNGVITSPNWPDKYPSRKECTWEISATPGHRVKLSFSEFEIEQHQECAYDHLEVFDGETEKSSILGRLCGSKVPEPLVATGNEMFIRFVSDASVQRKGFQATHSTECGGRLKAEAKPRDLFSHAQFGDNNYPVQADCEWILMTERGLRIELNFQTFEVEEEADCGYDFMELFDGHDASAMRLGRFCGSGPPEEIVSTGDAVLIHFHTDDTISKKGFHIRYRSVKYQDILHTK</sequence>
<reference key="1">
    <citation type="journal article" date="2002" name="Mech. Dev.">
        <title>Xolloid-related: a novel BMP1/Tolloid-related metalloprotease is expressed during early Xenopus development.</title>
        <authorList>
            <person name="Dale L."/>
            <person name="Evans W."/>
            <person name="Goodman S.A."/>
        </authorList>
    </citation>
    <scope>NUCLEOTIDE SEQUENCE [MRNA]</scope>
    <scope>DEVELOPMENTAL STAGE</scope>
    <scope>CHARACTERIZATION</scope>
    <scope>FUNCTION</scope>
</reference>
<name>TLL1_XENLA</name>
<organism>
    <name type="scientific">Xenopus laevis</name>
    <name type="common">African clawed frog</name>
    <dbReference type="NCBI Taxonomy" id="8355"/>
    <lineage>
        <taxon>Eukaryota</taxon>
        <taxon>Metazoa</taxon>
        <taxon>Chordata</taxon>
        <taxon>Craniata</taxon>
        <taxon>Vertebrata</taxon>
        <taxon>Euteleostomi</taxon>
        <taxon>Amphibia</taxon>
        <taxon>Batrachia</taxon>
        <taxon>Anura</taxon>
        <taxon>Pipoidea</taxon>
        <taxon>Pipidae</taxon>
        <taxon>Xenopodinae</taxon>
        <taxon>Xenopus</taxon>
        <taxon>Xenopus</taxon>
    </lineage>
</organism>
<keyword id="KW-0106">Calcium</keyword>
<keyword id="KW-0217">Developmental protein</keyword>
<keyword id="KW-0221">Differentiation</keyword>
<keyword id="KW-1015">Disulfide bond</keyword>
<keyword id="KW-0245">EGF-like domain</keyword>
<keyword id="KW-0325">Glycoprotein</keyword>
<keyword id="KW-0378">Hydrolase</keyword>
<keyword id="KW-0479">Metal-binding</keyword>
<keyword id="KW-0482">Metalloprotease</keyword>
<keyword id="KW-0645">Protease</keyword>
<keyword id="KW-1185">Reference proteome</keyword>
<keyword id="KW-0677">Repeat</keyword>
<keyword id="KW-0964">Secreted</keyword>
<keyword id="KW-0732">Signal</keyword>
<keyword id="KW-0862">Zinc</keyword>
<keyword id="KW-0865">Zymogen</keyword>
<evidence type="ECO:0000250" key="1"/>
<evidence type="ECO:0000255" key="2"/>
<evidence type="ECO:0000255" key="3">
    <source>
        <dbReference type="PROSITE-ProRule" id="PRU00059"/>
    </source>
</evidence>
<evidence type="ECO:0000255" key="4">
    <source>
        <dbReference type="PROSITE-ProRule" id="PRU00076"/>
    </source>
</evidence>
<evidence type="ECO:0000255" key="5">
    <source>
        <dbReference type="PROSITE-ProRule" id="PRU01211"/>
    </source>
</evidence>
<evidence type="ECO:0000256" key="6">
    <source>
        <dbReference type="SAM" id="MobiDB-lite"/>
    </source>
</evidence>
<evidence type="ECO:0000269" key="7">
    <source>
    </source>
</evidence>
<dbReference type="EC" id="3.4.24.-"/>
<dbReference type="EMBL" id="AF393242">
    <property type="protein sequence ID" value="AAM73675.1"/>
    <property type="molecule type" value="mRNA"/>
</dbReference>
<dbReference type="RefSeq" id="NP_001083894.1">
    <property type="nucleotide sequence ID" value="NM_001090425.1"/>
</dbReference>
<dbReference type="SMR" id="Q8JI28"/>
<dbReference type="IntAct" id="Q8JI28">
    <property type="interactions" value="2"/>
</dbReference>
<dbReference type="MEROPS" id="M12.016"/>
<dbReference type="GlyCosmos" id="Q8JI28">
    <property type="glycosylation" value="4 sites, No reported glycans"/>
</dbReference>
<dbReference type="GeneID" id="399178"/>
<dbReference type="KEGG" id="xla:399178"/>
<dbReference type="AGR" id="Xenbase:XB-GENE-865326"/>
<dbReference type="CTD" id="399178"/>
<dbReference type="Xenbase" id="XB-GENE-865326">
    <property type="gene designation" value="tll1.S"/>
</dbReference>
<dbReference type="OrthoDB" id="431034at2759"/>
<dbReference type="Proteomes" id="UP000186698">
    <property type="component" value="Chromosome 1S"/>
</dbReference>
<dbReference type="Bgee" id="399178">
    <property type="expression patterns" value="Expressed in neurula embryo and 12 other cell types or tissues"/>
</dbReference>
<dbReference type="GO" id="GO:0005576">
    <property type="term" value="C:extracellular region"/>
    <property type="evidence" value="ECO:0007669"/>
    <property type="project" value="UniProtKB-SubCell"/>
</dbReference>
<dbReference type="GO" id="GO:0005509">
    <property type="term" value="F:calcium ion binding"/>
    <property type="evidence" value="ECO:0007669"/>
    <property type="project" value="InterPro"/>
</dbReference>
<dbReference type="GO" id="GO:0004222">
    <property type="term" value="F:metalloendopeptidase activity"/>
    <property type="evidence" value="ECO:0007669"/>
    <property type="project" value="InterPro"/>
</dbReference>
<dbReference type="GO" id="GO:0008270">
    <property type="term" value="F:zinc ion binding"/>
    <property type="evidence" value="ECO:0007669"/>
    <property type="project" value="InterPro"/>
</dbReference>
<dbReference type="GO" id="GO:0030154">
    <property type="term" value="P:cell differentiation"/>
    <property type="evidence" value="ECO:0007669"/>
    <property type="project" value="UniProtKB-KW"/>
</dbReference>
<dbReference type="GO" id="GO:0006508">
    <property type="term" value="P:proteolysis"/>
    <property type="evidence" value="ECO:0007669"/>
    <property type="project" value="UniProtKB-KW"/>
</dbReference>
<dbReference type="CDD" id="cd00041">
    <property type="entry name" value="CUB"/>
    <property type="match status" value="5"/>
</dbReference>
<dbReference type="CDD" id="cd00054">
    <property type="entry name" value="EGF_CA"/>
    <property type="match status" value="2"/>
</dbReference>
<dbReference type="CDD" id="cd04281">
    <property type="entry name" value="ZnMc_BMP1_TLD"/>
    <property type="match status" value="1"/>
</dbReference>
<dbReference type="FunFam" id="2.10.25.10:FF:000022">
    <property type="entry name" value="Metalloendopeptidase"/>
    <property type="match status" value="2"/>
</dbReference>
<dbReference type="FunFam" id="2.60.120.290:FF:000004">
    <property type="entry name" value="Metalloendopeptidase"/>
    <property type="match status" value="1"/>
</dbReference>
<dbReference type="FunFam" id="2.60.120.290:FF:000007">
    <property type="entry name" value="Metalloendopeptidase"/>
    <property type="match status" value="1"/>
</dbReference>
<dbReference type="FunFam" id="2.60.120.290:FF:000009">
    <property type="entry name" value="Metalloendopeptidase"/>
    <property type="match status" value="1"/>
</dbReference>
<dbReference type="FunFam" id="2.60.120.290:FF:000011">
    <property type="entry name" value="Metalloendopeptidase"/>
    <property type="match status" value="1"/>
</dbReference>
<dbReference type="FunFam" id="3.40.390.10:FF:000004">
    <property type="entry name" value="Metalloendopeptidase"/>
    <property type="match status" value="1"/>
</dbReference>
<dbReference type="FunFam" id="2.60.120.290:FF:000005">
    <property type="entry name" value="Procollagen C-endopeptidase enhancer 1"/>
    <property type="match status" value="1"/>
</dbReference>
<dbReference type="Gene3D" id="3.40.390.10">
    <property type="entry name" value="Collagenase (Catalytic Domain)"/>
    <property type="match status" value="1"/>
</dbReference>
<dbReference type="Gene3D" id="2.10.25.10">
    <property type="entry name" value="Laminin"/>
    <property type="match status" value="2"/>
</dbReference>
<dbReference type="Gene3D" id="2.60.120.290">
    <property type="entry name" value="Spermadhesin, CUB domain"/>
    <property type="match status" value="5"/>
</dbReference>
<dbReference type="InterPro" id="IPR015446">
    <property type="entry name" value="BMP_1/tolloid-like"/>
</dbReference>
<dbReference type="InterPro" id="IPR000859">
    <property type="entry name" value="CUB_dom"/>
</dbReference>
<dbReference type="InterPro" id="IPR001881">
    <property type="entry name" value="EGF-like_Ca-bd_dom"/>
</dbReference>
<dbReference type="InterPro" id="IPR000742">
    <property type="entry name" value="EGF-like_dom"/>
</dbReference>
<dbReference type="InterPro" id="IPR000152">
    <property type="entry name" value="EGF-type_Asp/Asn_hydroxyl_site"/>
</dbReference>
<dbReference type="InterPro" id="IPR018097">
    <property type="entry name" value="EGF_Ca-bd_CS"/>
</dbReference>
<dbReference type="InterPro" id="IPR024079">
    <property type="entry name" value="MetalloPept_cat_dom_sf"/>
</dbReference>
<dbReference type="InterPro" id="IPR001506">
    <property type="entry name" value="Peptidase_M12A"/>
</dbReference>
<dbReference type="InterPro" id="IPR006026">
    <property type="entry name" value="Peptidase_Metallo"/>
</dbReference>
<dbReference type="InterPro" id="IPR035914">
    <property type="entry name" value="Sperma_CUB_dom_sf"/>
</dbReference>
<dbReference type="InterPro" id="IPR034036">
    <property type="entry name" value="ZnMP_TLD/BMP1"/>
</dbReference>
<dbReference type="PANTHER" id="PTHR24251:SF45">
    <property type="entry name" value="METALLOENDOPEPTIDASE"/>
    <property type="match status" value="1"/>
</dbReference>
<dbReference type="PANTHER" id="PTHR24251">
    <property type="entry name" value="OVOCHYMASE-RELATED"/>
    <property type="match status" value="1"/>
</dbReference>
<dbReference type="Pfam" id="PF01400">
    <property type="entry name" value="Astacin"/>
    <property type="match status" value="1"/>
</dbReference>
<dbReference type="Pfam" id="PF00431">
    <property type="entry name" value="CUB"/>
    <property type="match status" value="5"/>
</dbReference>
<dbReference type="Pfam" id="PF14670">
    <property type="entry name" value="FXa_inhibition"/>
    <property type="match status" value="2"/>
</dbReference>
<dbReference type="PIRSF" id="PIRSF001199">
    <property type="entry name" value="BMP_1/tolloid-like"/>
    <property type="match status" value="1"/>
</dbReference>
<dbReference type="PRINTS" id="PR00480">
    <property type="entry name" value="ASTACIN"/>
</dbReference>
<dbReference type="SMART" id="SM00042">
    <property type="entry name" value="CUB"/>
    <property type="match status" value="5"/>
</dbReference>
<dbReference type="SMART" id="SM00181">
    <property type="entry name" value="EGF"/>
    <property type="match status" value="2"/>
</dbReference>
<dbReference type="SMART" id="SM00179">
    <property type="entry name" value="EGF_CA"/>
    <property type="match status" value="2"/>
</dbReference>
<dbReference type="SMART" id="SM00235">
    <property type="entry name" value="ZnMc"/>
    <property type="match status" value="1"/>
</dbReference>
<dbReference type="SUPFAM" id="SSF57196">
    <property type="entry name" value="EGF/Laminin"/>
    <property type="match status" value="2"/>
</dbReference>
<dbReference type="SUPFAM" id="SSF55486">
    <property type="entry name" value="Metalloproteases ('zincins'), catalytic domain"/>
    <property type="match status" value="1"/>
</dbReference>
<dbReference type="SUPFAM" id="SSF49854">
    <property type="entry name" value="Spermadhesin, CUB domain"/>
    <property type="match status" value="5"/>
</dbReference>
<dbReference type="PROSITE" id="PS51864">
    <property type="entry name" value="ASTACIN"/>
    <property type="match status" value="1"/>
</dbReference>
<dbReference type="PROSITE" id="PS01180">
    <property type="entry name" value="CUB"/>
    <property type="match status" value="5"/>
</dbReference>
<dbReference type="PROSITE" id="PS01186">
    <property type="entry name" value="EGF_2"/>
    <property type="match status" value="2"/>
</dbReference>
<dbReference type="PROSITE" id="PS50026">
    <property type="entry name" value="EGF_3"/>
    <property type="match status" value="2"/>
</dbReference>
<dbReference type="PROSITE" id="PS01187">
    <property type="entry name" value="EGF_CA"/>
    <property type="match status" value="2"/>
</dbReference>
<dbReference type="PROSITE" id="PS00142">
    <property type="entry name" value="ZINC_PROTEASE"/>
    <property type="match status" value="1"/>
</dbReference>